<accession>Q3Z3H6</accession>
<feature type="chain" id="PRO_1000024234" description="Dihydroorotate dehydrogenase (quinone)">
    <location>
        <begin position="1"/>
        <end position="336"/>
    </location>
</feature>
<feature type="active site" description="Nucleophile" evidence="1">
    <location>
        <position position="175"/>
    </location>
</feature>
<feature type="binding site" evidence="1">
    <location>
        <begin position="62"/>
        <end position="66"/>
    </location>
    <ligand>
        <name>FMN</name>
        <dbReference type="ChEBI" id="CHEBI:58210"/>
    </ligand>
</feature>
<feature type="binding site" evidence="1">
    <location>
        <position position="66"/>
    </location>
    <ligand>
        <name>substrate</name>
    </ligand>
</feature>
<feature type="binding site" evidence="1">
    <location>
        <position position="86"/>
    </location>
    <ligand>
        <name>FMN</name>
        <dbReference type="ChEBI" id="CHEBI:58210"/>
    </ligand>
</feature>
<feature type="binding site" evidence="1">
    <location>
        <begin position="111"/>
        <end position="115"/>
    </location>
    <ligand>
        <name>substrate</name>
    </ligand>
</feature>
<feature type="binding site" evidence="1">
    <location>
        <position position="139"/>
    </location>
    <ligand>
        <name>FMN</name>
        <dbReference type="ChEBI" id="CHEBI:58210"/>
    </ligand>
</feature>
<feature type="binding site" evidence="1">
    <location>
        <position position="172"/>
    </location>
    <ligand>
        <name>FMN</name>
        <dbReference type="ChEBI" id="CHEBI:58210"/>
    </ligand>
</feature>
<feature type="binding site" evidence="1">
    <location>
        <position position="172"/>
    </location>
    <ligand>
        <name>substrate</name>
    </ligand>
</feature>
<feature type="binding site" evidence="1">
    <location>
        <position position="177"/>
    </location>
    <ligand>
        <name>substrate</name>
    </ligand>
</feature>
<feature type="binding site" evidence="1">
    <location>
        <position position="217"/>
    </location>
    <ligand>
        <name>FMN</name>
        <dbReference type="ChEBI" id="CHEBI:58210"/>
    </ligand>
</feature>
<feature type="binding site" evidence="1">
    <location>
        <position position="245"/>
    </location>
    <ligand>
        <name>FMN</name>
        <dbReference type="ChEBI" id="CHEBI:58210"/>
    </ligand>
</feature>
<feature type="binding site" evidence="1">
    <location>
        <begin position="246"/>
        <end position="247"/>
    </location>
    <ligand>
        <name>substrate</name>
    </ligand>
</feature>
<feature type="binding site" evidence="1">
    <location>
        <position position="268"/>
    </location>
    <ligand>
        <name>FMN</name>
        <dbReference type="ChEBI" id="CHEBI:58210"/>
    </ligand>
</feature>
<feature type="binding site" evidence="1">
    <location>
        <position position="297"/>
    </location>
    <ligand>
        <name>FMN</name>
        <dbReference type="ChEBI" id="CHEBI:58210"/>
    </ligand>
</feature>
<feature type="binding site" evidence="1">
    <location>
        <begin position="318"/>
        <end position="319"/>
    </location>
    <ligand>
        <name>FMN</name>
        <dbReference type="ChEBI" id="CHEBI:58210"/>
    </ligand>
</feature>
<comment type="function">
    <text evidence="1">Catalyzes the conversion of dihydroorotate to orotate with quinone as electron acceptor.</text>
</comment>
<comment type="catalytic activity">
    <reaction evidence="1">
        <text>(S)-dihydroorotate + a quinone = orotate + a quinol</text>
        <dbReference type="Rhea" id="RHEA:30187"/>
        <dbReference type="ChEBI" id="CHEBI:24646"/>
        <dbReference type="ChEBI" id="CHEBI:30839"/>
        <dbReference type="ChEBI" id="CHEBI:30864"/>
        <dbReference type="ChEBI" id="CHEBI:132124"/>
        <dbReference type="EC" id="1.3.5.2"/>
    </reaction>
</comment>
<comment type="cofactor">
    <cofactor evidence="1">
        <name>FMN</name>
        <dbReference type="ChEBI" id="CHEBI:58210"/>
    </cofactor>
    <text evidence="1">Binds 1 FMN per subunit.</text>
</comment>
<comment type="pathway">
    <text evidence="1">Pyrimidine metabolism; UMP biosynthesis via de novo pathway; orotate from (S)-dihydroorotate (quinone route): step 1/1.</text>
</comment>
<comment type="subunit">
    <text evidence="1">Monomer.</text>
</comment>
<comment type="subcellular location">
    <subcellularLocation>
        <location evidence="1">Cell membrane</location>
        <topology evidence="1">Peripheral membrane protein</topology>
    </subcellularLocation>
</comment>
<comment type="similarity">
    <text evidence="1">Belongs to the dihydroorotate dehydrogenase family. Type 2 subfamily.</text>
</comment>
<reference key="1">
    <citation type="journal article" date="2005" name="Nucleic Acids Res.">
        <title>Genome dynamics and diversity of Shigella species, the etiologic agents of bacillary dysentery.</title>
        <authorList>
            <person name="Yang F."/>
            <person name="Yang J."/>
            <person name="Zhang X."/>
            <person name="Chen L."/>
            <person name="Jiang Y."/>
            <person name="Yan Y."/>
            <person name="Tang X."/>
            <person name="Wang J."/>
            <person name="Xiong Z."/>
            <person name="Dong J."/>
            <person name="Xue Y."/>
            <person name="Zhu Y."/>
            <person name="Xu X."/>
            <person name="Sun L."/>
            <person name="Chen S."/>
            <person name="Nie H."/>
            <person name="Peng J."/>
            <person name="Xu J."/>
            <person name="Wang Y."/>
            <person name="Yuan Z."/>
            <person name="Wen Y."/>
            <person name="Yao Z."/>
            <person name="Shen Y."/>
            <person name="Qiang B."/>
            <person name="Hou Y."/>
            <person name="Yu J."/>
            <person name="Jin Q."/>
        </authorList>
    </citation>
    <scope>NUCLEOTIDE SEQUENCE [LARGE SCALE GENOMIC DNA]</scope>
    <source>
        <strain>Ss046</strain>
    </source>
</reference>
<keyword id="KW-1003">Cell membrane</keyword>
<keyword id="KW-0285">Flavoprotein</keyword>
<keyword id="KW-0288">FMN</keyword>
<keyword id="KW-0472">Membrane</keyword>
<keyword id="KW-0560">Oxidoreductase</keyword>
<keyword id="KW-0665">Pyrimidine biosynthesis</keyword>
<keyword id="KW-1185">Reference proteome</keyword>
<sequence length="336" mass="36775">MYYPFVRKALFQLDPERAHEFTFQQLRRITGTPFEALVRQKVPAKPVNCMGLTFKNPLGLAAGLDKDGECIDALGAMGFGSIEIGTVTPRPQPGNDKPRLFRLVDAEGLINRMGFNNLGVDNLVENVKKAHYDGVLGINIGKNKDTPVEQGKDDYLICMEKIYAYAGYIAINISSPNTPGLRTLQYGEALDDLLTAIKNKQNDLQAMHHKYVPIAVKIAPDLSEEELIQVADSLVRHNIDGVIATNTTLDRSLVQGMKNCDQTGGLSGRPLQLKSTEIIRRLSLELNGRLPIIGVGGIDSVIAAREKIAAGASLVQIYSGFIFKGPPLIKEIVTHI</sequence>
<evidence type="ECO:0000255" key="1">
    <source>
        <dbReference type="HAMAP-Rule" id="MF_00225"/>
    </source>
</evidence>
<name>PYRD_SHISS</name>
<organism>
    <name type="scientific">Shigella sonnei (strain Ss046)</name>
    <dbReference type="NCBI Taxonomy" id="300269"/>
    <lineage>
        <taxon>Bacteria</taxon>
        <taxon>Pseudomonadati</taxon>
        <taxon>Pseudomonadota</taxon>
        <taxon>Gammaproteobacteria</taxon>
        <taxon>Enterobacterales</taxon>
        <taxon>Enterobacteriaceae</taxon>
        <taxon>Shigella</taxon>
    </lineage>
</organism>
<proteinExistence type="inferred from homology"/>
<gene>
    <name evidence="1" type="primary">pyrD</name>
    <name type="ordered locus">SSON_0949</name>
</gene>
<protein>
    <recommendedName>
        <fullName evidence="1">Dihydroorotate dehydrogenase (quinone)</fullName>
        <ecNumber evidence="1">1.3.5.2</ecNumber>
    </recommendedName>
    <alternativeName>
        <fullName evidence="1">DHOdehase</fullName>
        <shortName evidence="1">DHOD</shortName>
        <shortName evidence="1">DHODase</shortName>
    </alternativeName>
    <alternativeName>
        <fullName evidence="1">Dihydroorotate oxidase</fullName>
    </alternativeName>
</protein>
<dbReference type="EC" id="1.3.5.2" evidence="1"/>
<dbReference type="EMBL" id="CP000038">
    <property type="protein sequence ID" value="AAZ87686.1"/>
    <property type="molecule type" value="Genomic_DNA"/>
</dbReference>
<dbReference type="RefSeq" id="WP_001295352.1">
    <property type="nucleotide sequence ID" value="NC_007384.1"/>
</dbReference>
<dbReference type="SMR" id="Q3Z3H6"/>
<dbReference type="GeneID" id="93776469"/>
<dbReference type="KEGG" id="ssn:SSON_0949"/>
<dbReference type="HOGENOM" id="CLU_013640_2_0_6"/>
<dbReference type="UniPathway" id="UPA00070">
    <property type="reaction ID" value="UER00946"/>
</dbReference>
<dbReference type="Proteomes" id="UP000002529">
    <property type="component" value="Chromosome"/>
</dbReference>
<dbReference type="GO" id="GO:0005737">
    <property type="term" value="C:cytoplasm"/>
    <property type="evidence" value="ECO:0007669"/>
    <property type="project" value="InterPro"/>
</dbReference>
<dbReference type="GO" id="GO:0005886">
    <property type="term" value="C:plasma membrane"/>
    <property type="evidence" value="ECO:0007669"/>
    <property type="project" value="UniProtKB-SubCell"/>
</dbReference>
<dbReference type="GO" id="GO:0106430">
    <property type="term" value="F:dihydroorotate dehydrogenase (quinone) activity"/>
    <property type="evidence" value="ECO:0007669"/>
    <property type="project" value="UniProtKB-EC"/>
</dbReference>
<dbReference type="GO" id="GO:0006207">
    <property type="term" value="P:'de novo' pyrimidine nucleobase biosynthetic process"/>
    <property type="evidence" value="ECO:0007669"/>
    <property type="project" value="InterPro"/>
</dbReference>
<dbReference type="GO" id="GO:0044205">
    <property type="term" value="P:'de novo' UMP biosynthetic process"/>
    <property type="evidence" value="ECO:0007669"/>
    <property type="project" value="UniProtKB-UniRule"/>
</dbReference>
<dbReference type="CDD" id="cd04738">
    <property type="entry name" value="DHOD_2_like"/>
    <property type="match status" value="1"/>
</dbReference>
<dbReference type="FunFam" id="3.20.20.70:FF:000028">
    <property type="entry name" value="Dihydroorotate dehydrogenase (quinone)"/>
    <property type="match status" value="1"/>
</dbReference>
<dbReference type="Gene3D" id="3.20.20.70">
    <property type="entry name" value="Aldolase class I"/>
    <property type="match status" value="1"/>
</dbReference>
<dbReference type="HAMAP" id="MF_00225">
    <property type="entry name" value="DHO_dh_type2"/>
    <property type="match status" value="1"/>
</dbReference>
<dbReference type="InterPro" id="IPR013785">
    <property type="entry name" value="Aldolase_TIM"/>
</dbReference>
<dbReference type="InterPro" id="IPR050074">
    <property type="entry name" value="DHO_dehydrogenase"/>
</dbReference>
<dbReference type="InterPro" id="IPR012135">
    <property type="entry name" value="Dihydroorotate_DH_1_2"/>
</dbReference>
<dbReference type="InterPro" id="IPR005719">
    <property type="entry name" value="Dihydroorotate_DH_2"/>
</dbReference>
<dbReference type="InterPro" id="IPR005720">
    <property type="entry name" value="Dihydroorotate_DH_cat"/>
</dbReference>
<dbReference type="InterPro" id="IPR001295">
    <property type="entry name" value="Dihydroorotate_DH_CS"/>
</dbReference>
<dbReference type="NCBIfam" id="NF003644">
    <property type="entry name" value="PRK05286.1-1"/>
    <property type="match status" value="1"/>
</dbReference>
<dbReference type="NCBIfam" id="NF003645">
    <property type="entry name" value="PRK05286.1-2"/>
    <property type="match status" value="1"/>
</dbReference>
<dbReference type="NCBIfam" id="NF003646">
    <property type="entry name" value="PRK05286.1-4"/>
    <property type="match status" value="1"/>
</dbReference>
<dbReference type="NCBIfam" id="NF003652">
    <property type="entry name" value="PRK05286.2-5"/>
    <property type="match status" value="1"/>
</dbReference>
<dbReference type="NCBIfam" id="TIGR01036">
    <property type="entry name" value="pyrD_sub2"/>
    <property type="match status" value="1"/>
</dbReference>
<dbReference type="PANTHER" id="PTHR48109:SF4">
    <property type="entry name" value="DIHYDROOROTATE DEHYDROGENASE (QUINONE), MITOCHONDRIAL"/>
    <property type="match status" value="1"/>
</dbReference>
<dbReference type="PANTHER" id="PTHR48109">
    <property type="entry name" value="DIHYDROOROTATE DEHYDROGENASE (QUINONE), MITOCHONDRIAL-RELATED"/>
    <property type="match status" value="1"/>
</dbReference>
<dbReference type="Pfam" id="PF01180">
    <property type="entry name" value="DHO_dh"/>
    <property type="match status" value="1"/>
</dbReference>
<dbReference type="PIRSF" id="PIRSF000164">
    <property type="entry name" value="DHO_oxidase"/>
    <property type="match status" value="1"/>
</dbReference>
<dbReference type="SUPFAM" id="SSF51395">
    <property type="entry name" value="FMN-linked oxidoreductases"/>
    <property type="match status" value="1"/>
</dbReference>
<dbReference type="PROSITE" id="PS00911">
    <property type="entry name" value="DHODEHASE_1"/>
    <property type="match status" value="1"/>
</dbReference>
<dbReference type="PROSITE" id="PS00912">
    <property type="entry name" value="DHODEHASE_2"/>
    <property type="match status" value="1"/>
</dbReference>